<accession>C1DMZ7</accession>
<feature type="chain" id="PRO_1000215136" description="Urease accessory protein UreG">
    <location>
        <begin position="1"/>
        <end position="204"/>
    </location>
</feature>
<feature type="binding site" evidence="1">
    <location>
        <begin position="12"/>
        <end position="19"/>
    </location>
    <ligand>
        <name>GTP</name>
        <dbReference type="ChEBI" id="CHEBI:37565"/>
    </ligand>
</feature>
<organism>
    <name type="scientific">Azotobacter vinelandii (strain DJ / ATCC BAA-1303)</name>
    <dbReference type="NCBI Taxonomy" id="322710"/>
    <lineage>
        <taxon>Bacteria</taxon>
        <taxon>Pseudomonadati</taxon>
        <taxon>Pseudomonadota</taxon>
        <taxon>Gammaproteobacteria</taxon>
        <taxon>Pseudomonadales</taxon>
        <taxon>Pseudomonadaceae</taxon>
        <taxon>Azotobacter</taxon>
    </lineage>
</organism>
<sequence>MNSQPLRVGIGGPVGSGKTALTLALCRALRGRYELAVVTNDIYTQEDAEFLVRNEALAPERIIGVETGGCPHTAIREDASINLEAVERLNRRFPGLDLILVESGGDNLSATFSPELSDLTLYVIDVSAGDKLPRKGGPGICKSDLLVINKIDLAPLVGASLEVMERDARKMRGERPFVFSNQKTGQGLETIVAFIEKQGMLGVA</sequence>
<gene>
    <name evidence="1" type="primary">ureG</name>
    <name type="ordered locus">Avin_09380</name>
</gene>
<name>UREG_AZOVD</name>
<comment type="function">
    <text evidence="1">Facilitates the functional incorporation of the urease nickel metallocenter. This process requires GTP hydrolysis, probably effectuated by UreG.</text>
</comment>
<comment type="subunit">
    <text evidence="1">Homodimer. UreD, UreF and UreG form a complex that acts as a GTP-hydrolysis-dependent molecular chaperone, activating the urease apoprotein by helping to assemble the nickel containing metallocenter of UreC. The UreE protein probably delivers the nickel.</text>
</comment>
<comment type="subcellular location">
    <subcellularLocation>
        <location evidence="1">Cytoplasm</location>
    </subcellularLocation>
</comment>
<comment type="similarity">
    <text evidence="1">Belongs to the SIMIBI class G3E GTPase family. UreG subfamily.</text>
</comment>
<keyword id="KW-0143">Chaperone</keyword>
<keyword id="KW-0963">Cytoplasm</keyword>
<keyword id="KW-0342">GTP-binding</keyword>
<keyword id="KW-0996">Nickel insertion</keyword>
<keyword id="KW-0547">Nucleotide-binding</keyword>
<evidence type="ECO:0000255" key="1">
    <source>
        <dbReference type="HAMAP-Rule" id="MF_01389"/>
    </source>
</evidence>
<protein>
    <recommendedName>
        <fullName evidence="1">Urease accessory protein UreG</fullName>
    </recommendedName>
</protein>
<reference key="1">
    <citation type="journal article" date="2009" name="J. Bacteriol.">
        <title>Genome sequence of Azotobacter vinelandii, an obligate aerobe specialized to support diverse anaerobic metabolic processes.</title>
        <authorList>
            <person name="Setubal J.C."/>
            <person name="Dos Santos P."/>
            <person name="Goldman B.S."/>
            <person name="Ertesvaag H."/>
            <person name="Espin G."/>
            <person name="Rubio L.M."/>
            <person name="Valla S."/>
            <person name="Almeida N.F."/>
            <person name="Balasubramanian D."/>
            <person name="Cromes L."/>
            <person name="Curatti L."/>
            <person name="Du Z."/>
            <person name="Godsy E."/>
            <person name="Goodner B."/>
            <person name="Hellner-Burris K."/>
            <person name="Hernandez J.A."/>
            <person name="Houmiel K."/>
            <person name="Imperial J."/>
            <person name="Kennedy C."/>
            <person name="Larson T.J."/>
            <person name="Latreille P."/>
            <person name="Ligon L.S."/>
            <person name="Lu J."/>
            <person name="Maerk M."/>
            <person name="Miller N.M."/>
            <person name="Norton S."/>
            <person name="O'Carroll I.P."/>
            <person name="Paulsen I."/>
            <person name="Raulfs E.C."/>
            <person name="Roemer R."/>
            <person name="Rosser J."/>
            <person name="Segura D."/>
            <person name="Slater S."/>
            <person name="Stricklin S.L."/>
            <person name="Studholme D.J."/>
            <person name="Sun J."/>
            <person name="Viana C.J."/>
            <person name="Wallin E."/>
            <person name="Wang B."/>
            <person name="Wheeler C."/>
            <person name="Zhu H."/>
            <person name="Dean D.R."/>
            <person name="Dixon R."/>
            <person name="Wood D."/>
        </authorList>
    </citation>
    <scope>NUCLEOTIDE SEQUENCE [LARGE SCALE GENOMIC DNA]</scope>
    <source>
        <strain>DJ / ATCC BAA-1303</strain>
    </source>
</reference>
<dbReference type="EMBL" id="CP001157">
    <property type="protein sequence ID" value="ACO77177.1"/>
    <property type="molecule type" value="Genomic_DNA"/>
</dbReference>
<dbReference type="RefSeq" id="WP_012699602.1">
    <property type="nucleotide sequence ID" value="NC_012560.1"/>
</dbReference>
<dbReference type="SMR" id="C1DMZ7"/>
<dbReference type="STRING" id="322710.Avin_09380"/>
<dbReference type="EnsemblBacteria" id="ACO77177">
    <property type="protein sequence ID" value="ACO77177"/>
    <property type="gene ID" value="Avin_09380"/>
</dbReference>
<dbReference type="GeneID" id="88184306"/>
<dbReference type="KEGG" id="avn:Avin_09380"/>
<dbReference type="eggNOG" id="COG0378">
    <property type="taxonomic scope" value="Bacteria"/>
</dbReference>
<dbReference type="HOGENOM" id="CLU_072144_1_0_6"/>
<dbReference type="OrthoDB" id="9802035at2"/>
<dbReference type="Proteomes" id="UP000002424">
    <property type="component" value="Chromosome"/>
</dbReference>
<dbReference type="GO" id="GO:0005737">
    <property type="term" value="C:cytoplasm"/>
    <property type="evidence" value="ECO:0007669"/>
    <property type="project" value="UniProtKB-SubCell"/>
</dbReference>
<dbReference type="GO" id="GO:0005525">
    <property type="term" value="F:GTP binding"/>
    <property type="evidence" value="ECO:0007669"/>
    <property type="project" value="UniProtKB-KW"/>
</dbReference>
<dbReference type="GO" id="GO:0003924">
    <property type="term" value="F:GTPase activity"/>
    <property type="evidence" value="ECO:0007669"/>
    <property type="project" value="InterPro"/>
</dbReference>
<dbReference type="GO" id="GO:0016151">
    <property type="term" value="F:nickel cation binding"/>
    <property type="evidence" value="ECO:0007669"/>
    <property type="project" value="UniProtKB-UniRule"/>
</dbReference>
<dbReference type="GO" id="GO:0043419">
    <property type="term" value="P:urea catabolic process"/>
    <property type="evidence" value="ECO:0007669"/>
    <property type="project" value="InterPro"/>
</dbReference>
<dbReference type="CDD" id="cd05540">
    <property type="entry name" value="UreG"/>
    <property type="match status" value="1"/>
</dbReference>
<dbReference type="FunFam" id="3.40.50.300:FF:000208">
    <property type="entry name" value="Urease accessory protein UreG"/>
    <property type="match status" value="1"/>
</dbReference>
<dbReference type="Gene3D" id="3.40.50.300">
    <property type="entry name" value="P-loop containing nucleotide triphosphate hydrolases"/>
    <property type="match status" value="1"/>
</dbReference>
<dbReference type="HAMAP" id="MF_01389">
    <property type="entry name" value="UreG"/>
    <property type="match status" value="1"/>
</dbReference>
<dbReference type="InterPro" id="IPR003495">
    <property type="entry name" value="CobW/HypB/UreG_nucleotide-bd"/>
</dbReference>
<dbReference type="InterPro" id="IPR027417">
    <property type="entry name" value="P-loop_NTPase"/>
</dbReference>
<dbReference type="InterPro" id="IPR004400">
    <property type="entry name" value="UreG"/>
</dbReference>
<dbReference type="NCBIfam" id="TIGR00101">
    <property type="entry name" value="ureG"/>
    <property type="match status" value="1"/>
</dbReference>
<dbReference type="PANTHER" id="PTHR31715">
    <property type="entry name" value="UREASE ACCESSORY PROTEIN G"/>
    <property type="match status" value="1"/>
</dbReference>
<dbReference type="PANTHER" id="PTHR31715:SF0">
    <property type="entry name" value="UREASE ACCESSORY PROTEIN G"/>
    <property type="match status" value="1"/>
</dbReference>
<dbReference type="Pfam" id="PF02492">
    <property type="entry name" value="cobW"/>
    <property type="match status" value="1"/>
</dbReference>
<dbReference type="PIRSF" id="PIRSF005624">
    <property type="entry name" value="Ni-bind_GTPase"/>
    <property type="match status" value="1"/>
</dbReference>
<dbReference type="SUPFAM" id="SSF52540">
    <property type="entry name" value="P-loop containing nucleoside triphosphate hydrolases"/>
    <property type="match status" value="1"/>
</dbReference>
<proteinExistence type="inferred from homology"/>